<reference key="1">
    <citation type="submission" date="2009-02" db="EMBL/GenBank/DDBJ databases">
        <title>Genome sequence of Bacillus cereus 03BB102.</title>
        <authorList>
            <person name="Dodson R.J."/>
            <person name="Jackson P."/>
            <person name="Munk A.C."/>
            <person name="Brettin T."/>
            <person name="Bruce D."/>
            <person name="Detter C."/>
            <person name="Tapia R."/>
            <person name="Han C."/>
            <person name="Sutton G."/>
            <person name="Sims D."/>
        </authorList>
    </citation>
    <scope>NUCLEOTIDE SEQUENCE [LARGE SCALE GENOMIC DNA]</scope>
    <source>
        <strain>03BB102</strain>
    </source>
</reference>
<gene>
    <name type="ordered locus">BCA_4498</name>
</gene>
<comment type="function">
    <text evidence="1">Could be a nuclease involved in processing of the 5'-end of pre-16S rRNA.</text>
</comment>
<comment type="subcellular location">
    <subcellularLocation>
        <location evidence="1">Cytoplasm</location>
    </subcellularLocation>
</comment>
<comment type="similarity">
    <text evidence="1">Belongs to the YqgF nuclease family.</text>
</comment>
<feature type="chain" id="PRO_1000147461" description="Putative pre-16S rRNA nuclease">
    <location>
        <begin position="1"/>
        <end position="137"/>
    </location>
</feature>
<protein>
    <recommendedName>
        <fullName evidence="1">Putative pre-16S rRNA nuclease</fullName>
        <ecNumber evidence="1">3.1.-.-</ecNumber>
    </recommendedName>
</protein>
<name>YQGF_BACC3</name>
<organism>
    <name type="scientific">Bacillus cereus (strain 03BB102)</name>
    <dbReference type="NCBI Taxonomy" id="572264"/>
    <lineage>
        <taxon>Bacteria</taxon>
        <taxon>Bacillati</taxon>
        <taxon>Bacillota</taxon>
        <taxon>Bacilli</taxon>
        <taxon>Bacillales</taxon>
        <taxon>Bacillaceae</taxon>
        <taxon>Bacillus</taxon>
        <taxon>Bacillus cereus group</taxon>
    </lineage>
</organism>
<accession>C1EST1</accession>
<dbReference type="EC" id="3.1.-.-" evidence="1"/>
<dbReference type="EMBL" id="CP001407">
    <property type="protein sequence ID" value="ACO29490.1"/>
    <property type="molecule type" value="Genomic_DNA"/>
</dbReference>
<dbReference type="SMR" id="C1EST1"/>
<dbReference type="KEGG" id="bcx:BCA_4498"/>
<dbReference type="PATRIC" id="fig|572264.18.peg.4446"/>
<dbReference type="Proteomes" id="UP000002210">
    <property type="component" value="Chromosome"/>
</dbReference>
<dbReference type="GO" id="GO:0005829">
    <property type="term" value="C:cytosol"/>
    <property type="evidence" value="ECO:0007669"/>
    <property type="project" value="TreeGrafter"/>
</dbReference>
<dbReference type="GO" id="GO:0004518">
    <property type="term" value="F:nuclease activity"/>
    <property type="evidence" value="ECO:0007669"/>
    <property type="project" value="UniProtKB-KW"/>
</dbReference>
<dbReference type="GO" id="GO:0000967">
    <property type="term" value="P:rRNA 5'-end processing"/>
    <property type="evidence" value="ECO:0007669"/>
    <property type="project" value="UniProtKB-UniRule"/>
</dbReference>
<dbReference type="CDD" id="cd16964">
    <property type="entry name" value="YqgF"/>
    <property type="match status" value="1"/>
</dbReference>
<dbReference type="FunFam" id="3.30.420.140:FF:000003">
    <property type="entry name" value="Putative pre-16S rRNA nuclease"/>
    <property type="match status" value="1"/>
</dbReference>
<dbReference type="Gene3D" id="3.30.420.140">
    <property type="entry name" value="YqgF/RNase H-like domain"/>
    <property type="match status" value="1"/>
</dbReference>
<dbReference type="HAMAP" id="MF_00651">
    <property type="entry name" value="Nuclease_YqgF"/>
    <property type="match status" value="1"/>
</dbReference>
<dbReference type="InterPro" id="IPR012337">
    <property type="entry name" value="RNaseH-like_sf"/>
</dbReference>
<dbReference type="InterPro" id="IPR005227">
    <property type="entry name" value="YqgF"/>
</dbReference>
<dbReference type="InterPro" id="IPR006641">
    <property type="entry name" value="YqgF/RNaseH-like_dom"/>
</dbReference>
<dbReference type="InterPro" id="IPR037027">
    <property type="entry name" value="YqgF/RNaseH-like_dom_sf"/>
</dbReference>
<dbReference type="NCBIfam" id="TIGR00250">
    <property type="entry name" value="RNAse_H_YqgF"/>
    <property type="match status" value="1"/>
</dbReference>
<dbReference type="PANTHER" id="PTHR33317">
    <property type="entry name" value="POLYNUCLEOTIDYL TRANSFERASE, RIBONUCLEASE H-LIKE SUPERFAMILY PROTEIN"/>
    <property type="match status" value="1"/>
</dbReference>
<dbReference type="PANTHER" id="PTHR33317:SF4">
    <property type="entry name" value="POLYNUCLEOTIDYL TRANSFERASE, RIBONUCLEASE H-LIKE SUPERFAMILY PROTEIN"/>
    <property type="match status" value="1"/>
</dbReference>
<dbReference type="Pfam" id="PF03652">
    <property type="entry name" value="RuvX"/>
    <property type="match status" value="1"/>
</dbReference>
<dbReference type="SMART" id="SM00732">
    <property type="entry name" value="YqgFc"/>
    <property type="match status" value="1"/>
</dbReference>
<dbReference type="SUPFAM" id="SSF53098">
    <property type="entry name" value="Ribonuclease H-like"/>
    <property type="match status" value="1"/>
</dbReference>
<evidence type="ECO:0000255" key="1">
    <source>
        <dbReference type="HAMAP-Rule" id="MF_00651"/>
    </source>
</evidence>
<proteinExistence type="inferred from homology"/>
<sequence length="137" mass="15296">MRILGLDVGTKTVGVAISDEMGWTAQGLETIKINEERGQFGFDRISELVKQYDVDKIVVGLPKNMNGTIGPRGEACQQFAENLRELLQLDVVMWDERLSTMAAERLLISADVSRKKRKQVIDKMAAVVILQGFLDSK</sequence>
<keyword id="KW-0963">Cytoplasm</keyword>
<keyword id="KW-0378">Hydrolase</keyword>
<keyword id="KW-0540">Nuclease</keyword>
<keyword id="KW-0690">Ribosome biogenesis</keyword>